<evidence type="ECO:0000255" key="1">
    <source>
        <dbReference type="HAMAP-Rule" id="MF_00344"/>
    </source>
</evidence>
<gene>
    <name evidence="1" type="primary">guaA</name>
    <name type="ordered locus">CHY_1068</name>
</gene>
<dbReference type="EC" id="6.3.5.2" evidence="1"/>
<dbReference type="EMBL" id="CP000141">
    <property type="protein sequence ID" value="ABB15970.1"/>
    <property type="molecule type" value="Genomic_DNA"/>
</dbReference>
<dbReference type="RefSeq" id="WP_011343990.1">
    <property type="nucleotide sequence ID" value="NC_007503.1"/>
</dbReference>
<dbReference type="SMR" id="Q3AD70"/>
<dbReference type="FunCoup" id="Q3AD70">
    <property type="interactions" value="484"/>
</dbReference>
<dbReference type="STRING" id="246194.CHY_1068"/>
<dbReference type="MEROPS" id="C26.A21"/>
<dbReference type="KEGG" id="chy:CHY_1068"/>
<dbReference type="eggNOG" id="COG0518">
    <property type="taxonomic scope" value="Bacteria"/>
</dbReference>
<dbReference type="eggNOG" id="COG0519">
    <property type="taxonomic scope" value="Bacteria"/>
</dbReference>
<dbReference type="HOGENOM" id="CLU_014340_0_5_9"/>
<dbReference type="InParanoid" id="Q3AD70"/>
<dbReference type="OrthoDB" id="9802219at2"/>
<dbReference type="UniPathway" id="UPA00189">
    <property type="reaction ID" value="UER00296"/>
</dbReference>
<dbReference type="Proteomes" id="UP000002706">
    <property type="component" value="Chromosome"/>
</dbReference>
<dbReference type="GO" id="GO:0005829">
    <property type="term" value="C:cytosol"/>
    <property type="evidence" value="ECO:0007669"/>
    <property type="project" value="TreeGrafter"/>
</dbReference>
<dbReference type="GO" id="GO:0005524">
    <property type="term" value="F:ATP binding"/>
    <property type="evidence" value="ECO:0007669"/>
    <property type="project" value="UniProtKB-UniRule"/>
</dbReference>
<dbReference type="GO" id="GO:0003921">
    <property type="term" value="F:GMP synthase activity"/>
    <property type="evidence" value="ECO:0007669"/>
    <property type="project" value="InterPro"/>
</dbReference>
<dbReference type="CDD" id="cd01742">
    <property type="entry name" value="GATase1_GMP_Synthase"/>
    <property type="match status" value="1"/>
</dbReference>
<dbReference type="CDD" id="cd01997">
    <property type="entry name" value="GMP_synthase_C"/>
    <property type="match status" value="1"/>
</dbReference>
<dbReference type="FunFam" id="3.30.300.10:FF:000002">
    <property type="entry name" value="GMP synthase [glutamine-hydrolyzing]"/>
    <property type="match status" value="1"/>
</dbReference>
<dbReference type="FunFam" id="3.40.50.620:FF:000001">
    <property type="entry name" value="GMP synthase [glutamine-hydrolyzing]"/>
    <property type="match status" value="1"/>
</dbReference>
<dbReference type="FunFam" id="3.40.50.880:FF:000001">
    <property type="entry name" value="GMP synthase [glutamine-hydrolyzing]"/>
    <property type="match status" value="1"/>
</dbReference>
<dbReference type="Gene3D" id="3.30.300.10">
    <property type="match status" value="1"/>
</dbReference>
<dbReference type="Gene3D" id="3.40.50.880">
    <property type="match status" value="1"/>
</dbReference>
<dbReference type="Gene3D" id="3.40.50.620">
    <property type="entry name" value="HUPs"/>
    <property type="match status" value="1"/>
</dbReference>
<dbReference type="HAMAP" id="MF_00344">
    <property type="entry name" value="GMP_synthase"/>
    <property type="match status" value="1"/>
</dbReference>
<dbReference type="InterPro" id="IPR029062">
    <property type="entry name" value="Class_I_gatase-like"/>
</dbReference>
<dbReference type="InterPro" id="IPR017926">
    <property type="entry name" value="GATASE"/>
</dbReference>
<dbReference type="InterPro" id="IPR001674">
    <property type="entry name" value="GMP_synth_C"/>
</dbReference>
<dbReference type="InterPro" id="IPR004739">
    <property type="entry name" value="GMP_synth_GATase"/>
</dbReference>
<dbReference type="InterPro" id="IPR022955">
    <property type="entry name" value="GMP_synthase"/>
</dbReference>
<dbReference type="InterPro" id="IPR025777">
    <property type="entry name" value="GMPS_ATP_PPase_dom"/>
</dbReference>
<dbReference type="InterPro" id="IPR022310">
    <property type="entry name" value="NAD/GMP_synthase"/>
</dbReference>
<dbReference type="InterPro" id="IPR014729">
    <property type="entry name" value="Rossmann-like_a/b/a_fold"/>
</dbReference>
<dbReference type="NCBIfam" id="TIGR00884">
    <property type="entry name" value="guaA_Cterm"/>
    <property type="match status" value="1"/>
</dbReference>
<dbReference type="NCBIfam" id="TIGR00888">
    <property type="entry name" value="guaA_Nterm"/>
    <property type="match status" value="1"/>
</dbReference>
<dbReference type="NCBIfam" id="NF000848">
    <property type="entry name" value="PRK00074.1"/>
    <property type="match status" value="1"/>
</dbReference>
<dbReference type="PANTHER" id="PTHR11922:SF2">
    <property type="entry name" value="GMP SYNTHASE [GLUTAMINE-HYDROLYZING]"/>
    <property type="match status" value="1"/>
</dbReference>
<dbReference type="PANTHER" id="PTHR11922">
    <property type="entry name" value="GMP SYNTHASE-RELATED"/>
    <property type="match status" value="1"/>
</dbReference>
<dbReference type="Pfam" id="PF00117">
    <property type="entry name" value="GATase"/>
    <property type="match status" value="1"/>
</dbReference>
<dbReference type="Pfam" id="PF00958">
    <property type="entry name" value="GMP_synt_C"/>
    <property type="match status" value="1"/>
</dbReference>
<dbReference type="Pfam" id="PF02540">
    <property type="entry name" value="NAD_synthase"/>
    <property type="match status" value="1"/>
</dbReference>
<dbReference type="PRINTS" id="PR00097">
    <property type="entry name" value="ANTSNTHASEII"/>
</dbReference>
<dbReference type="PRINTS" id="PR00099">
    <property type="entry name" value="CPSGATASE"/>
</dbReference>
<dbReference type="PRINTS" id="PR00096">
    <property type="entry name" value="GATASE"/>
</dbReference>
<dbReference type="SUPFAM" id="SSF52402">
    <property type="entry name" value="Adenine nucleotide alpha hydrolases-like"/>
    <property type="match status" value="1"/>
</dbReference>
<dbReference type="SUPFAM" id="SSF52317">
    <property type="entry name" value="Class I glutamine amidotransferase-like"/>
    <property type="match status" value="1"/>
</dbReference>
<dbReference type="SUPFAM" id="SSF54810">
    <property type="entry name" value="GMP synthetase C-terminal dimerisation domain"/>
    <property type="match status" value="1"/>
</dbReference>
<dbReference type="PROSITE" id="PS51273">
    <property type="entry name" value="GATASE_TYPE_1"/>
    <property type="match status" value="1"/>
</dbReference>
<dbReference type="PROSITE" id="PS51553">
    <property type="entry name" value="GMPS_ATP_PPASE"/>
    <property type="match status" value="1"/>
</dbReference>
<name>GUAA_CARHZ</name>
<accession>Q3AD70</accession>
<proteinExistence type="inferred from homology"/>
<sequence length="509" mass="57147">MASKVIVLDFGGQYSQLIARRIRELKVYCEMLPYNTPLEKIVQENPGGIVFSGGPSSVYGEGAPTVDPEIYRLNIPILGICYGMQLMAHQLGGIVRPAEGREYGKTPLFILNRDRLFAGLNETEICWMSHGDFVAKAPEGFLVTAKTEYTPIAAMENRERNLYAVQFHPEVVHTPKGKEILKNFLYEICGLTPDWTMESFAQKAIREIKEQVGEEKVVCALSGGVDSSVAAVLVHKAIGDNLTCIFVDHGLLRKGEAEEVVRTFKEQFQMNLVFVDAKEQFLAKLKGVRDPEQKRKIIGHEFIRVFEEEAAKLGDIRFLVQGTLYPDVVESGTATAATIKSHHNVGGLPEDMKFQLIEPLKWLFKDEVRELGLELGLPESIVWRHPFPGPGLAVRVLGEITEEKLAILREADYIFIDELKKSGWYRKTWQAFAVLPNLQSVGVMGDERTYAYTIALRAVTSEDGMTADWVRLPYELLEKISARIVGEVKGVNRVVYDITSKPPATIEWE</sequence>
<comment type="function">
    <text evidence="1">Catalyzes the synthesis of GMP from XMP.</text>
</comment>
<comment type="catalytic activity">
    <reaction evidence="1">
        <text>XMP + L-glutamine + ATP + H2O = GMP + L-glutamate + AMP + diphosphate + 2 H(+)</text>
        <dbReference type="Rhea" id="RHEA:11680"/>
        <dbReference type="ChEBI" id="CHEBI:15377"/>
        <dbReference type="ChEBI" id="CHEBI:15378"/>
        <dbReference type="ChEBI" id="CHEBI:29985"/>
        <dbReference type="ChEBI" id="CHEBI:30616"/>
        <dbReference type="ChEBI" id="CHEBI:33019"/>
        <dbReference type="ChEBI" id="CHEBI:57464"/>
        <dbReference type="ChEBI" id="CHEBI:58115"/>
        <dbReference type="ChEBI" id="CHEBI:58359"/>
        <dbReference type="ChEBI" id="CHEBI:456215"/>
        <dbReference type="EC" id="6.3.5.2"/>
    </reaction>
</comment>
<comment type="pathway">
    <text evidence="1">Purine metabolism; GMP biosynthesis; GMP from XMP (L-Gln route): step 1/1.</text>
</comment>
<comment type="subunit">
    <text evidence="1">Homodimer.</text>
</comment>
<feature type="chain" id="PRO_0000229416" description="GMP synthase [glutamine-hydrolyzing]">
    <location>
        <begin position="1"/>
        <end position="509"/>
    </location>
</feature>
<feature type="domain" description="Glutamine amidotransferase type-1" evidence="1">
    <location>
        <begin position="4"/>
        <end position="194"/>
    </location>
</feature>
<feature type="domain" description="GMPS ATP-PPase" evidence="1">
    <location>
        <begin position="195"/>
        <end position="384"/>
    </location>
</feature>
<feature type="active site" description="Nucleophile" evidence="1">
    <location>
        <position position="81"/>
    </location>
</feature>
<feature type="active site" evidence="1">
    <location>
        <position position="168"/>
    </location>
</feature>
<feature type="active site" evidence="1">
    <location>
        <position position="170"/>
    </location>
</feature>
<feature type="binding site" evidence="1">
    <location>
        <begin position="222"/>
        <end position="228"/>
    </location>
    <ligand>
        <name>ATP</name>
        <dbReference type="ChEBI" id="CHEBI:30616"/>
    </ligand>
</feature>
<keyword id="KW-0067">ATP-binding</keyword>
<keyword id="KW-0315">Glutamine amidotransferase</keyword>
<keyword id="KW-0332">GMP biosynthesis</keyword>
<keyword id="KW-0436">Ligase</keyword>
<keyword id="KW-0547">Nucleotide-binding</keyword>
<keyword id="KW-0658">Purine biosynthesis</keyword>
<keyword id="KW-1185">Reference proteome</keyword>
<reference key="1">
    <citation type="journal article" date="2005" name="PLoS Genet.">
        <title>Life in hot carbon monoxide: the complete genome sequence of Carboxydothermus hydrogenoformans Z-2901.</title>
        <authorList>
            <person name="Wu M."/>
            <person name="Ren Q."/>
            <person name="Durkin A.S."/>
            <person name="Daugherty S.C."/>
            <person name="Brinkac L.M."/>
            <person name="Dodson R.J."/>
            <person name="Madupu R."/>
            <person name="Sullivan S.A."/>
            <person name="Kolonay J.F."/>
            <person name="Nelson W.C."/>
            <person name="Tallon L.J."/>
            <person name="Jones K.M."/>
            <person name="Ulrich L.E."/>
            <person name="Gonzalez J.M."/>
            <person name="Zhulin I.B."/>
            <person name="Robb F.T."/>
            <person name="Eisen J.A."/>
        </authorList>
    </citation>
    <scope>NUCLEOTIDE SEQUENCE [LARGE SCALE GENOMIC DNA]</scope>
    <source>
        <strain>ATCC BAA-161 / DSM 6008 / Z-2901</strain>
    </source>
</reference>
<organism>
    <name type="scientific">Carboxydothermus hydrogenoformans (strain ATCC BAA-161 / DSM 6008 / Z-2901)</name>
    <dbReference type="NCBI Taxonomy" id="246194"/>
    <lineage>
        <taxon>Bacteria</taxon>
        <taxon>Bacillati</taxon>
        <taxon>Bacillota</taxon>
        <taxon>Clostridia</taxon>
        <taxon>Thermoanaerobacterales</taxon>
        <taxon>Thermoanaerobacteraceae</taxon>
        <taxon>Carboxydothermus</taxon>
    </lineage>
</organism>
<protein>
    <recommendedName>
        <fullName evidence="1">GMP synthase [glutamine-hydrolyzing]</fullName>
        <ecNumber evidence="1">6.3.5.2</ecNumber>
    </recommendedName>
    <alternativeName>
        <fullName evidence="1">GMP synthetase</fullName>
    </alternativeName>
    <alternativeName>
        <fullName evidence="1">Glutamine amidotransferase</fullName>
    </alternativeName>
</protein>